<name>HSLV_STAAN</name>
<accession>P65797</accession>
<accession>Q99UL8</accession>
<sequence length="181" mass="19572">MSNTTLHATTIYAVRHNGKAAMAGDGQVTLGQQVIMKQTARKVRRLYEGKVLAGFAGSVADAFTLFEKFETKLQQFSGNLERAAVELAQEWRGDKQLRQLEAMLIVMDKDAILVVSGTGEVIAPDDDLIAIGSGGNYALSAGRALKRHASHLSAEEMAYESLKVAADICVFTNDNIVVETL</sequence>
<proteinExistence type="evidence at protein level"/>
<keyword id="KW-0021">Allosteric enzyme</keyword>
<keyword id="KW-0963">Cytoplasm</keyword>
<keyword id="KW-0378">Hydrolase</keyword>
<keyword id="KW-0479">Metal-binding</keyword>
<keyword id="KW-0645">Protease</keyword>
<keyword id="KW-0915">Sodium</keyword>
<keyword id="KW-0888">Threonine protease</keyword>
<protein>
    <recommendedName>
        <fullName evidence="1">ATP-dependent protease subunit HslV</fullName>
        <ecNumber evidence="1">3.4.25.2</ecNumber>
    </recommendedName>
</protein>
<feature type="chain" id="PRO_0000148148" description="ATP-dependent protease subunit HslV">
    <location>
        <begin position="1"/>
        <end position="181"/>
    </location>
</feature>
<feature type="active site" evidence="1">
    <location>
        <position position="9"/>
    </location>
</feature>
<feature type="binding site" evidence="1">
    <location>
        <position position="166"/>
    </location>
    <ligand>
        <name>Na(+)</name>
        <dbReference type="ChEBI" id="CHEBI:29101"/>
    </ligand>
</feature>
<feature type="binding site" evidence="1">
    <location>
        <position position="169"/>
    </location>
    <ligand>
        <name>Na(+)</name>
        <dbReference type="ChEBI" id="CHEBI:29101"/>
    </ligand>
</feature>
<feature type="binding site" evidence="1">
    <location>
        <position position="172"/>
    </location>
    <ligand>
        <name>Na(+)</name>
        <dbReference type="ChEBI" id="CHEBI:29101"/>
    </ligand>
</feature>
<gene>
    <name evidence="1" type="primary">hslV</name>
    <name type="synonym">clpQ</name>
    <name type="ordered locus">SA1096</name>
</gene>
<dbReference type="EC" id="3.4.25.2" evidence="1"/>
<dbReference type="EMBL" id="BA000018">
    <property type="protein sequence ID" value="BAB42348.1"/>
    <property type="molecule type" value="Genomic_DNA"/>
</dbReference>
<dbReference type="PIR" id="H89898">
    <property type="entry name" value="H89898"/>
</dbReference>
<dbReference type="RefSeq" id="WP_000072681.1">
    <property type="nucleotide sequence ID" value="NC_002745.2"/>
</dbReference>
<dbReference type="SMR" id="P65797"/>
<dbReference type="MEROPS" id="T01.007"/>
<dbReference type="EnsemblBacteria" id="BAB42348">
    <property type="protein sequence ID" value="BAB42348"/>
    <property type="gene ID" value="BAB42348"/>
</dbReference>
<dbReference type="KEGG" id="sau:SA1096"/>
<dbReference type="HOGENOM" id="CLU_093872_1_1_9"/>
<dbReference type="GO" id="GO:0009376">
    <property type="term" value="C:HslUV protease complex"/>
    <property type="evidence" value="ECO:0007669"/>
    <property type="project" value="UniProtKB-UniRule"/>
</dbReference>
<dbReference type="GO" id="GO:0005839">
    <property type="term" value="C:proteasome core complex"/>
    <property type="evidence" value="ECO:0007669"/>
    <property type="project" value="InterPro"/>
</dbReference>
<dbReference type="GO" id="GO:0046872">
    <property type="term" value="F:metal ion binding"/>
    <property type="evidence" value="ECO:0007669"/>
    <property type="project" value="UniProtKB-KW"/>
</dbReference>
<dbReference type="GO" id="GO:0004298">
    <property type="term" value="F:threonine-type endopeptidase activity"/>
    <property type="evidence" value="ECO:0007669"/>
    <property type="project" value="UniProtKB-KW"/>
</dbReference>
<dbReference type="GO" id="GO:0051603">
    <property type="term" value="P:proteolysis involved in protein catabolic process"/>
    <property type="evidence" value="ECO:0007669"/>
    <property type="project" value="InterPro"/>
</dbReference>
<dbReference type="CDD" id="cd01913">
    <property type="entry name" value="protease_HslV"/>
    <property type="match status" value="1"/>
</dbReference>
<dbReference type="Gene3D" id="3.60.20.10">
    <property type="entry name" value="Glutamine Phosphoribosylpyrophosphate, subunit 1, domain 1"/>
    <property type="match status" value="1"/>
</dbReference>
<dbReference type="HAMAP" id="MF_00248">
    <property type="entry name" value="HslV"/>
    <property type="match status" value="1"/>
</dbReference>
<dbReference type="InterPro" id="IPR022281">
    <property type="entry name" value="ATP-dep_Prtase_HsIV_su"/>
</dbReference>
<dbReference type="InterPro" id="IPR029055">
    <property type="entry name" value="Ntn_hydrolases_N"/>
</dbReference>
<dbReference type="InterPro" id="IPR001353">
    <property type="entry name" value="Proteasome_sua/b"/>
</dbReference>
<dbReference type="InterPro" id="IPR023333">
    <property type="entry name" value="Proteasome_suB-type"/>
</dbReference>
<dbReference type="NCBIfam" id="TIGR03692">
    <property type="entry name" value="ATP_dep_HslV"/>
    <property type="match status" value="1"/>
</dbReference>
<dbReference type="NCBIfam" id="NF003964">
    <property type="entry name" value="PRK05456.1"/>
    <property type="match status" value="1"/>
</dbReference>
<dbReference type="PANTHER" id="PTHR32194:SF0">
    <property type="entry name" value="ATP-DEPENDENT PROTEASE SUBUNIT HSLV"/>
    <property type="match status" value="1"/>
</dbReference>
<dbReference type="PANTHER" id="PTHR32194">
    <property type="entry name" value="METALLOPROTEASE TLDD"/>
    <property type="match status" value="1"/>
</dbReference>
<dbReference type="Pfam" id="PF00227">
    <property type="entry name" value="Proteasome"/>
    <property type="match status" value="1"/>
</dbReference>
<dbReference type="PIRSF" id="PIRSF039093">
    <property type="entry name" value="HslV"/>
    <property type="match status" value="1"/>
</dbReference>
<dbReference type="SUPFAM" id="SSF56235">
    <property type="entry name" value="N-terminal nucleophile aminohydrolases (Ntn hydrolases)"/>
    <property type="match status" value="1"/>
</dbReference>
<dbReference type="PROSITE" id="PS51476">
    <property type="entry name" value="PROTEASOME_BETA_2"/>
    <property type="match status" value="1"/>
</dbReference>
<evidence type="ECO:0000255" key="1">
    <source>
        <dbReference type="HAMAP-Rule" id="MF_00248"/>
    </source>
</evidence>
<comment type="function">
    <text evidence="1">Protease subunit of a proteasome-like degradation complex believed to be a general protein degrading machinery.</text>
</comment>
<comment type="catalytic activity">
    <reaction evidence="1">
        <text>ATP-dependent cleavage of peptide bonds with broad specificity.</text>
        <dbReference type="EC" id="3.4.25.2"/>
    </reaction>
</comment>
<comment type="activity regulation">
    <text evidence="1">Allosterically activated by HslU binding.</text>
</comment>
<comment type="subunit">
    <text evidence="1">A double ring-shaped homohexamer of HslV is capped on each side by a ring-shaped HslU homohexamer. The assembly of the HslU/HslV complex is dependent on binding of ATP.</text>
</comment>
<comment type="subcellular location">
    <subcellularLocation>
        <location evidence="1">Cytoplasm</location>
    </subcellularLocation>
</comment>
<comment type="similarity">
    <text evidence="1">Belongs to the peptidase T1B family. HslV subfamily.</text>
</comment>
<reference key="1">
    <citation type="journal article" date="2001" name="Lancet">
        <title>Whole genome sequencing of meticillin-resistant Staphylococcus aureus.</title>
        <authorList>
            <person name="Kuroda M."/>
            <person name="Ohta T."/>
            <person name="Uchiyama I."/>
            <person name="Baba T."/>
            <person name="Yuzawa H."/>
            <person name="Kobayashi I."/>
            <person name="Cui L."/>
            <person name="Oguchi A."/>
            <person name="Aoki K."/>
            <person name="Nagai Y."/>
            <person name="Lian J.-Q."/>
            <person name="Ito T."/>
            <person name="Kanamori M."/>
            <person name="Matsumaru H."/>
            <person name="Maruyama A."/>
            <person name="Murakami H."/>
            <person name="Hosoyama A."/>
            <person name="Mizutani-Ui Y."/>
            <person name="Takahashi N.K."/>
            <person name="Sawano T."/>
            <person name="Inoue R."/>
            <person name="Kaito C."/>
            <person name="Sekimizu K."/>
            <person name="Hirakawa H."/>
            <person name="Kuhara S."/>
            <person name="Goto S."/>
            <person name="Yabuzaki J."/>
            <person name="Kanehisa M."/>
            <person name="Yamashita A."/>
            <person name="Oshima K."/>
            <person name="Furuya K."/>
            <person name="Yoshino C."/>
            <person name="Shiba T."/>
            <person name="Hattori M."/>
            <person name="Ogasawara N."/>
            <person name="Hayashi H."/>
            <person name="Hiramatsu K."/>
        </authorList>
    </citation>
    <scope>NUCLEOTIDE SEQUENCE [LARGE SCALE GENOMIC DNA]</scope>
    <source>
        <strain>N315</strain>
    </source>
</reference>
<reference key="2">
    <citation type="submission" date="2007-10" db="UniProtKB">
        <title>Shotgun proteomic analysis of total and membrane protein extracts of S. aureus strain N315.</title>
        <authorList>
            <person name="Vaezzadeh A.R."/>
            <person name="Deshusses J."/>
            <person name="Lescuyer P."/>
            <person name="Hochstrasser D.F."/>
        </authorList>
    </citation>
    <scope>IDENTIFICATION BY MASS SPECTROMETRY [LARGE SCALE ANALYSIS]</scope>
    <source>
        <strain>N315</strain>
    </source>
</reference>
<organism>
    <name type="scientific">Staphylococcus aureus (strain N315)</name>
    <dbReference type="NCBI Taxonomy" id="158879"/>
    <lineage>
        <taxon>Bacteria</taxon>
        <taxon>Bacillati</taxon>
        <taxon>Bacillota</taxon>
        <taxon>Bacilli</taxon>
        <taxon>Bacillales</taxon>
        <taxon>Staphylococcaceae</taxon>
        <taxon>Staphylococcus</taxon>
    </lineage>
</organism>